<accession>Q28H63</accession>
<comment type="function">
    <text evidence="1">Functions in replication-dependent translation of histone mRNAs which differ from other eukaryotic mRNAs in that they do not end with a poly-A tail but a stem-loop. May participate in circularizing those mRNAs specifically enhancing their translation (By similarity).</text>
</comment>
<comment type="subunit">
    <text evidence="1">Interacts with eif4g1, eif4g2 and slbp; probably tethered by SLBP to the 3'-end of mRNAs ending with the histone stem-loop, it also interacts with eif4g1 which is bound to their 5'-end.</text>
</comment>
<comment type="subcellular location">
    <subcellularLocation>
        <location evidence="1">Cytoplasm</location>
    </subcellularLocation>
    <subcellularLocation>
        <location evidence="1">Nucleus</location>
    </subcellularLocation>
</comment>
<comment type="similarity">
    <text evidence="2">Belongs to the MIF4GD family.</text>
</comment>
<gene>
    <name type="primary">mif4gd</name>
    <name type="ORF">TEgg122i01.1</name>
</gene>
<evidence type="ECO:0000250" key="1"/>
<evidence type="ECO:0000305" key="2"/>
<protein>
    <recommendedName>
        <fullName>MIF4G domain-containing protein</fullName>
    </recommendedName>
</protein>
<reference key="1">
    <citation type="submission" date="2006-10" db="EMBL/GenBank/DDBJ databases">
        <authorList>
            <consortium name="Sanger Xenopus tropicalis EST/cDNA project"/>
        </authorList>
    </citation>
    <scope>NUCLEOTIDE SEQUENCE [LARGE SCALE MRNA]</scope>
    <source>
        <tissue>Egg</tissue>
    </source>
</reference>
<organism>
    <name type="scientific">Xenopus tropicalis</name>
    <name type="common">Western clawed frog</name>
    <name type="synonym">Silurana tropicalis</name>
    <dbReference type="NCBI Taxonomy" id="8364"/>
    <lineage>
        <taxon>Eukaryota</taxon>
        <taxon>Metazoa</taxon>
        <taxon>Chordata</taxon>
        <taxon>Craniata</taxon>
        <taxon>Vertebrata</taxon>
        <taxon>Euteleostomi</taxon>
        <taxon>Amphibia</taxon>
        <taxon>Batrachia</taxon>
        <taxon>Anura</taxon>
        <taxon>Pipoidea</taxon>
        <taxon>Pipidae</taxon>
        <taxon>Xenopodinae</taxon>
        <taxon>Xenopus</taxon>
        <taxon>Silurana</taxon>
    </lineage>
</organism>
<keyword id="KW-0963">Cytoplasm</keyword>
<keyword id="KW-0539">Nucleus</keyword>
<keyword id="KW-1185">Reference proteome</keyword>
<keyword id="KW-0810">Translation regulation</keyword>
<dbReference type="EMBL" id="CR761027">
    <property type="protein sequence ID" value="CAJ83660.1"/>
    <property type="molecule type" value="mRNA"/>
</dbReference>
<dbReference type="RefSeq" id="NP_001016440.1">
    <property type="nucleotide sequence ID" value="NM_001016440.2"/>
</dbReference>
<dbReference type="RefSeq" id="XP_012827222.2">
    <property type="nucleotide sequence ID" value="XM_012971768.3"/>
</dbReference>
<dbReference type="RefSeq" id="XP_012827223.2">
    <property type="nucleotide sequence ID" value="XM_012971769.3"/>
</dbReference>
<dbReference type="SMR" id="Q28H63"/>
<dbReference type="FunCoup" id="Q28H63">
    <property type="interactions" value="1410"/>
</dbReference>
<dbReference type="STRING" id="8364.ENSXETP00000043810"/>
<dbReference type="PaxDb" id="8364-ENSXETP00000027356"/>
<dbReference type="GeneID" id="549194"/>
<dbReference type="KEGG" id="xtr:549194"/>
<dbReference type="AGR" id="Xenbase:XB-GENE-5757641"/>
<dbReference type="CTD" id="57409"/>
<dbReference type="Xenbase" id="XB-GENE-5757641">
    <property type="gene designation" value="mif4gd"/>
</dbReference>
<dbReference type="eggNOG" id="KOG3942">
    <property type="taxonomic scope" value="Eukaryota"/>
</dbReference>
<dbReference type="InParanoid" id="Q28H63"/>
<dbReference type="OrthoDB" id="6357832at2759"/>
<dbReference type="Proteomes" id="UP000008143">
    <property type="component" value="Chromosome 10"/>
</dbReference>
<dbReference type="Bgee" id="ENSXETG00000027063">
    <property type="expression patterns" value="Expressed in 2-cell stage embryo and 12 other cell types or tissues"/>
</dbReference>
<dbReference type="GO" id="GO:0005737">
    <property type="term" value="C:cytoplasm"/>
    <property type="evidence" value="ECO:0007669"/>
    <property type="project" value="UniProtKB-SubCell"/>
</dbReference>
<dbReference type="GO" id="GO:0005634">
    <property type="term" value="C:nucleus"/>
    <property type="evidence" value="ECO:0007669"/>
    <property type="project" value="UniProtKB-SubCell"/>
</dbReference>
<dbReference type="GO" id="GO:0003723">
    <property type="term" value="F:RNA binding"/>
    <property type="evidence" value="ECO:0007669"/>
    <property type="project" value="InterPro"/>
</dbReference>
<dbReference type="GO" id="GO:0006417">
    <property type="term" value="P:regulation of translation"/>
    <property type="evidence" value="ECO:0007669"/>
    <property type="project" value="UniProtKB-KW"/>
</dbReference>
<dbReference type="FunFam" id="1.25.40.180:FF:000108">
    <property type="entry name" value="MIF4G domain-containing protein A"/>
    <property type="match status" value="1"/>
</dbReference>
<dbReference type="Gene3D" id="1.25.40.180">
    <property type="match status" value="1"/>
</dbReference>
<dbReference type="InterPro" id="IPR016024">
    <property type="entry name" value="ARM-type_fold"/>
</dbReference>
<dbReference type="InterPro" id="IPR003890">
    <property type="entry name" value="MIF4G-like_typ-3"/>
</dbReference>
<dbReference type="InterPro" id="IPR051367">
    <property type="entry name" value="mRNA_TranslReg/HistoneTransl"/>
</dbReference>
<dbReference type="PANTHER" id="PTHR23254">
    <property type="entry name" value="EIF4G DOMAIN PROTEIN"/>
    <property type="match status" value="1"/>
</dbReference>
<dbReference type="PANTHER" id="PTHR23254:SF17">
    <property type="entry name" value="MIF4G DOMAIN-CONTAINING PROTEIN"/>
    <property type="match status" value="1"/>
</dbReference>
<dbReference type="Pfam" id="PF02854">
    <property type="entry name" value="MIF4G"/>
    <property type="match status" value="1"/>
</dbReference>
<dbReference type="SMART" id="SM00543">
    <property type="entry name" value="MIF4G"/>
    <property type="match status" value="1"/>
</dbReference>
<dbReference type="SUPFAM" id="SSF48371">
    <property type="entry name" value="ARM repeat"/>
    <property type="match status" value="1"/>
</dbReference>
<name>MI4GD_XENTR</name>
<sequence length="223" mass="25835">MADSEQQEDYKIQGFDADTQSLLKTALKEPGSVDLEKAASVIVDQSLRDATFSREAGRMCYTIIQAESKQTGRTVFRSTLLNRLQVEYKNRKETRARSLQEWVCYVGFMCNVFDYLRVNNMPMLALVNPVYDCLFDLVQPDNLKREEEVDCLVLQLHRVGEQLEKMNCQRMDELFSQLRDSFLLQGGLSSLTQLLLLEMIEYRAAGWRMTDAAQKYYYSEVSE</sequence>
<proteinExistence type="evidence at transcript level"/>
<feature type="chain" id="PRO_0000337096" description="MIF4G domain-containing protein">
    <location>
        <begin position="1"/>
        <end position="223"/>
    </location>
</feature>
<feature type="domain" description="MIF4G">
    <location>
        <begin position="9"/>
        <end position="206"/>
    </location>
</feature>